<proteinExistence type="inferred from homology"/>
<dbReference type="EC" id="2.7.7.27" evidence="1"/>
<dbReference type="EMBL" id="BX248356">
    <property type="protein sequence ID" value="CAE49510.1"/>
    <property type="molecule type" value="Genomic_DNA"/>
</dbReference>
<dbReference type="SMR" id="Q6NHY8"/>
<dbReference type="STRING" id="257309.DIP0992"/>
<dbReference type="KEGG" id="cdi:DIP0992"/>
<dbReference type="HOGENOM" id="CLU_029499_14_1_11"/>
<dbReference type="UniPathway" id="UPA00164"/>
<dbReference type="Proteomes" id="UP000002198">
    <property type="component" value="Chromosome"/>
</dbReference>
<dbReference type="GO" id="GO:0005524">
    <property type="term" value="F:ATP binding"/>
    <property type="evidence" value="ECO:0007669"/>
    <property type="project" value="UniProtKB-KW"/>
</dbReference>
<dbReference type="GO" id="GO:0008878">
    <property type="term" value="F:glucose-1-phosphate adenylyltransferase activity"/>
    <property type="evidence" value="ECO:0007669"/>
    <property type="project" value="UniProtKB-UniRule"/>
</dbReference>
<dbReference type="GO" id="GO:0005978">
    <property type="term" value="P:glycogen biosynthetic process"/>
    <property type="evidence" value="ECO:0007669"/>
    <property type="project" value="UniProtKB-UniRule"/>
</dbReference>
<dbReference type="CDD" id="cd02508">
    <property type="entry name" value="ADP_Glucose_PP"/>
    <property type="match status" value="1"/>
</dbReference>
<dbReference type="CDD" id="cd04651">
    <property type="entry name" value="LbH_G1P_AT_C"/>
    <property type="match status" value="1"/>
</dbReference>
<dbReference type="Gene3D" id="2.160.10.10">
    <property type="entry name" value="Hexapeptide repeat proteins"/>
    <property type="match status" value="1"/>
</dbReference>
<dbReference type="Gene3D" id="3.90.550.10">
    <property type="entry name" value="Spore Coat Polysaccharide Biosynthesis Protein SpsA, Chain A"/>
    <property type="match status" value="1"/>
</dbReference>
<dbReference type="HAMAP" id="MF_00624">
    <property type="entry name" value="GlgC"/>
    <property type="match status" value="1"/>
</dbReference>
<dbReference type="InterPro" id="IPR011831">
    <property type="entry name" value="ADP-Glc_PPase"/>
</dbReference>
<dbReference type="InterPro" id="IPR005836">
    <property type="entry name" value="ADP_Glu_pyroP_CS"/>
</dbReference>
<dbReference type="InterPro" id="IPR023049">
    <property type="entry name" value="GlgC_bac"/>
</dbReference>
<dbReference type="InterPro" id="IPR056818">
    <property type="entry name" value="GlmU/GlgC-like_hexapep"/>
</dbReference>
<dbReference type="InterPro" id="IPR005835">
    <property type="entry name" value="NTP_transferase_dom"/>
</dbReference>
<dbReference type="InterPro" id="IPR029044">
    <property type="entry name" value="Nucleotide-diphossugar_trans"/>
</dbReference>
<dbReference type="InterPro" id="IPR011004">
    <property type="entry name" value="Trimer_LpxA-like_sf"/>
</dbReference>
<dbReference type="NCBIfam" id="TIGR02091">
    <property type="entry name" value="glgC"/>
    <property type="match status" value="1"/>
</dbReference>
<dbReference type="NCBIfam" id="NF001947">
    <property type="entry name" value="PRK00725.1"/>
    <property type="match status" value="1"/>
</dbReference>
<dbReference type="NCBIfam" id="NF002023">
    <property type="entry name" value="PRK00844.1"/>
    <property type="match status" value="1"/>
</dbReference>
<dbReference type="PANTHER" id="PTHR43523:SF2">
    <property type="entry name" value="GLUCOSE-1-PHOSPHATE ADENYLYLTRANSFERASE"/>
    <property type="match status" value="1"/>
</dbReference>
<dbReference type="PANTHER" id="PTHR43523">
    <property type="entry name" value="GLUCOSE-1-PHOSPHATE ADENYLYLTRANSFERASE-RELATED"/>
    <property type="match status" value="1"/>
</dbReference>
<dbReference type="Pfam" id="PF24894">
    <property type="entry name" value="Hexapep_GlmU"/>
    <property type="match status" value="1"/>
</dbReference>
<dbReference type="Pfam" id="PF00483">
    <property type="entry name" value="NTP_transferase"/>
    <property type="match status" value="1"/>
</dbReference>
<dbReference type="SUPFAM" id="SSF53448">
    <property type="entry name" value="Nucleotide-diphospho-sugar transferases"/>
    <property type="match status" value="1"/>
</dbReference>
<dbReference type="SUPFAM" id="SSF51161">
    <property type="entry name" value="Trimeric LpxA-like enzymes"/>
    <property type="match status" value="1"/>
</dbReference>
<dbReference type="PROSITE" id="PS00808">
    <property type="entry name" value="ADP_GLC_PYROPHOSPH_1"/>
    <property type="match status" value="1"/>
</dbReference>
<dbReference type="PROSITE" id="PS00809">
    <property type="entry name" value="ADP_GLC_PYROPHOSPH_2"/>
    <property type="match status" value="1"/>
</dbReference>
<dbReference type="PROSITE" id="PS00810">
    <property type="entry name" value="ADP_GLC_PYROPHOSPH_3"/>
    <property type="match status" value="1"/>
</dbReference>
<name>GLGC_CORDI</name>
<organism>
    <name type="scientific">Corynebacterium diphtheriae (strain ATCC 700971 / NCTC 13129 / Biotype gravis)</name>
    <dbReference type="NCBI Taxonomy" id="257309"/>
    <lineage>
        <taxon>Bacteria</taxon>
        <taxon>Bacillati</taxon>
        <taxon>Actinomycetota</taxon>
        <taxon>Actinomycetes</taxon>
        <taxon>Mycobacteriales</taxon>
        <taxon>Corynebacteriaceae</taxon>
        <taxon>Corynebacterium</taxon>
    </lineage>
</organism>
<keyword id="KW-0067">ATP-binding</keyword>
<keyword id="KW-0119">Carbohydrate metabolism</keyword>
<keyword id="KW-0320">Glycogen biosynthesis</keyword>
<keyword id="KW-0321">Glycogen metabolism</keyword>
<keyword id="KW-0547">Nucleotide-binding</keyword>
<keyword id="KW-0548">Nucleotidyltransferase</keyword>
<keyword id="KW-1185">Reference proteome</keyword>
<keyword id="KW-0808">Transferase</keyword>
<comment type="function">
    <text evidence="1">Involved in the biosynthesis of ADP-glucose, a building block required for the elongation reactions to produce glycogen. Catalyzes the reaction between ATP and alpha-D-glucose 1-phosphate (G1P) to produce pyrophosphate and ADP-Glc.</text>
</comment>
<comment type="catalytic activity">
    <reaction evidence="1">
        <text>alpha-D-glucose 1-phosphate + ATP + H(+) = ADP-alpha-D-glucose + diphosphate</text>
        <dbReference type="Rhea" id="RHEA:12120"/>
        <dbReference type="ChEBI" id="CHEBI:15378"/>
        <dbReference type="ChEBI" id="CHEBI:30616"/>
        <dbReference type="ChEBI" id="CHEBI:33019"/>
        <dbReference type="ChEBI" id="CHEBI:57498"/>
        <dbReference type="ChEBI" id="CHEBI:58601"/>
        <dbReference type="EC" id="2.7.7.27"/>
    </reaction>
</comment>
<comment type="pathway">
    <text evidence="1">Glycan biosynthesis; glycogen biosynthesis.</text>
</comment>
<comment type="subunit">
    <text evidence="1">Homotetramer.</text>
</comment>
<comment type="similarity">
    <text evidence="1">Belongs to the bacterial/plant glucose-1-phosphate adenylyltransferase family.</text>
</comment>
<gene>
    <name evidence="1" type="primary">glgC</name>
    <name type="ordered locus">DIP0992</name>
</gene>
<feature type="chain" id="PRO_0000195290" description="Glucose-1-phosphate adenylyltransferase">
    <location>
        <begin position="1"/>
        <end position="427"/>
    </location>
</feature>
<feature type="binding site" evidence="1">
    <location>
        <position position="121"/>
    </location>
    <ligand>
        <name>alpha-D-glucose 1-phosphate</name>
        <dbReference type="ChEBI" id="CHEBI:58601"/>
    </ligand>
</feature>
<feature type="binding site" evidence="1">
    <location>
        <position position="186"/>
    </location>
    <ligand>
        <name>alpha-D-glucose 1-phosphate</name>
        <dbReference type="ChEBI" id="CHEBI:58601"/>
    </ligand>
</feature>
<feature type="binding site" evidence="1">
    <location>
        <begin position="201"/>
        <end position="202"/>
    </location>
    <ligand>
        <name>alpha-D-glucose 1-phosphate</name>
        <dbReference type="ChEBI" id="CHEBI:58601"/>
    </ligand>
</feature>
<feature type="binding site" evidence="1">
    <location>
        <position position="219"/>
    </location>
    <ligand>
        <name>alpha-D-glucose 1-phosphate</name>
        <dbReference type="ChEBI" id="CHEBI:58601"/>
    </ligand>
</feature>
<reference key="1">
    <citation type="journal article" date="2003" name="Nucleic Acids Res.">
        <title>The complete genome sequence and analysis of Corynebacterium diphtheriae NCTC13129.</title>
        <authorList>
            <person name="Cerdeno-Tarraga A.-M."/>
            <person name="Efstratiou A."/>
            <person name="Dover L.G."/>
            <person name="Holden M.T.G."/>
            <person name="Pallen M.J."/>
            <person name="Bentley S.D."/>
            <person name="Besra G.S."/>
            <person name="Churcher C.M."/>
            <person name="James K.D."/>
            <person name="De Zoysa A."/>
            <person name="Chillingworth T."/>
            <person name="Cronin A."/>
            <person name="Dowd L."/>
            <person name="Feltwell T."/>
            <person name="Hamlin N."/>
            <person name="Holroyd S."/>
            <person name="Jagels K."/>
            <person name="Moule S."/>
            <person name="Quail M.A."/>
            <person name="Rabbinowitsch E."/>
            <person name="Rutherford K.M."/>
            <person name="Thomson N.R."/>
            <person name="Unwin L."/>
            <person name="Whitehead S."/>
            <person name="Barrell B.G."/>
            <person name="Parkhill J."/>
        </authorList>
    </citation>
    <scope>NUCLEOTIDE SEQUENCE [LARGE SCALE GENOMIC DNA]</scope>
    <source>
        <strain>ATCC 700971 / NCTC 13129 / Biotype gravis</strain>
    </source>
</reference>
<accession>Q6NHY8</accession>
<sequence>MFLCLIVGKPARGAEILDRLGFVRSKQNVLAIVLAGGEGKRLFPLTEDRAKPAVPFGGTYRLIDFVLSNLVNAGYLKICVLTQYKSHSLDRHISQAWQFSGPTSQYIASVPAQQRLGKRWYMGSADAILQSLNLVYDERPDYVLVFGADHVYRMDPEQMVADHIASGKAVTVAGIRVPRSEASAFGCIQADENNNITEFLEKPADPPGTPDDPSMTFASMGNYVFSTDALIQALKEDENNPDSEHDMGGDIIPYFVSMGQANVYDFNKNVVPGSTDRDRAYWRDVGTVDAFYEAHMDLISVHPVFNLYNQQWPIRSTERGDLPPAKFVQGGIAQASMVAQGSIVSGSTVRNSVVSTDVVVEEGATVEGSVIMPGARIGKGAVVRHCILDKNVVVSDGQVIGVDRERDEQRFQISPGGVVVVGKNFVV</sequence>
<evidence type="ECO:0000255" key="1">
    <source>
        <dbReference type="HAMAP-Rule" id="MF_00624"/>
    </source>
</evidence>
<protein>
    <recommendedName>
        <fullName evidence="1">Glucose-1-phosphate adenylyltransferase</fullName>
        <ecNumber evidence="1">2.7.7.27</ecNumber>
    </recommendedName>
    <alternativeName>
        <fullName evidence="1">ADP-glucose pyrophosphorylase</fullName>
        <shortName evidence="1">ADPGlc PPase</shortName>
    </alternativeName>
    <alternativeName>
        <fullName evidence="1">ADP-glucose synthase</fullName>
    </alternativeName>
</protein>